<keyword id="KW-0045">Antibiotic biosynthesis</keyword>
<keyword id="KW-0963">Cytoplasm</keyword>
<keyword id="KW-0349">Heme</keyword>
<keyword id="KW-0408">Iron</keyword>
<keyword id="KW-0479">Metal-binding</keyword>
<keyword id="KW-0503">Monooxygenase</keyword>
<keyword id="KW-0521">NADP</keyword>
<keyword id="KW-0560">Oxidoreductase</keyword>
<protein>
    <recommendedName>
        <fullName>Cytochrome P-450 monooxygenase DoxA</fullName>
        <ecNumber evidence="2">1.14.13.181</ecNumber>
    </recommendedName>
    <alternativeName>
        <fullName>13-deoxycarminomycin C-13 hydroxylase</fullName>
    </alternativeName>
    <alternativeName>
        <fullName>13-deoxydaunorubicin C-13 hydroxylase</fullName>
    </alternativeName>
    <alternativeName>
        <fullName>13-dihydrocarminomycin C-13 hydroxylase</fullName>
    </alternativeName>
    <alternativeName>
        <fullName>13-dihydrodaunorubicin C-13 hydroxylase</fullName>
    </alternativeName>
    <alternativeName>
        <fullName>Daunorubicin C-14 hydroxylase</fullName>
    </alternativeName>
</protein>
<reference key="1">
    <citation type="journal article" date="2001" name="J. Microbiol. Biotechnol.">
        <title>Molecular cloning and characterization of the doxA cytochrome P-450 hydroxylase gene in Streptomyces peucetius subsp. caesius ATCC 27952.</title>
        <authorList>
            <person name="Hong Y.-S."/>
            <person name="Kim H.S."/>
            <person name="Lee J.-H."/>
            <person name="Kim K.-W."/>
            <person name="Lee J.J."/>
        </authorList>
    </citation>
    <scope>NUCLEOTIDE SEQUENCE [GENOMIC DNA]</scope>
    <scope>FUNCTION</scope>
    <source>
        <strain>ATCC 27952 / DSM 41231 / NBRC 14660 / 106FI</strain>
    </source>
</reference>
<reference key="2">
    <citation type="journal article" date="1969" name="Biotechnol. Bioeng.">
        <title>Adriamycin, 14-hydroxydaunomycin, a new antitumor antibiotic from S. peucetius var. caesius.</title>
        <authorList>
            <person name="Arcamone F."/>
            <person name="Cassinelli G."/>
            <person name="Fantini G."/>
            <person name="Grein A."/>
            <person name="Orezzi P."/>
            <person name="Pol C."/>
            <person name="Spalla C."/>
        </authorList>
    </citation>
    <scope>FUNCTION</scope>
    <scope>CATALYTIC ACTIVITY</scope>
    <source>
        <strain>ATCC 27952 / DSM 41231 / NBRC 14660 / 106FI</strain>
    </source>
</reference>
<organism>
    <name type="scientific">Streptomyces peucetius subsp. caesius</name>
    <dbReference type="NCBI Taxonomy" id="55158"/>
    <lineage>
        <taxon>Bacteria</taxon>
        <taxon>Bacillati</taxon>
        <taxon>Actinomycetota</taxon>
        <taxon>Actinomycetes</taxon>
        <taxon>Kitasatosporales</taxon>
        <taxon>Streptomycetaceae</taxon>
        <taxon>Streptomyces</taxon>
    </lineage>
</organism>
<proteinExistence type="evidence at protein level"/>
<evidence type="ECO:0000250" key="1"/>
<evidence type="ECO:0000269" key="2">
    <source>
    </source>
</evidence>
<evidence type="ECO:0000269" key="3">
    <source ref="1"/>
</evidence>
<evidence type="ECO:0000305" key="4"/>
<evidence type="ECO:0000305" key="5">
    <source>
    </source>
</evidence>
<feature type="chain" id="PRO_0000425685" description="Cytochrome P-450 monooxygenase DoxA">
    <location>
        <begin position="1"/>
        <end position="420"/>
    </location>
</feature>
<feature type="binding site" description="axial binding residue" evidence="1">
    <location>
        <position position="367"/>
    </location>
    <ligand>
        <name>heme</name>
        <dbReference type="ChEBI" id="CHEBI:30413"/>
    </ligand>
    <ligandPart>
        <name>Fe</name>
        <dbReference type="ChEBI" id="CHEBI:18248"/>
    </ligandPart>
</feature>
<sequence>MSGEAPRVAVDPFACPMMTMQRKPEVHDAFREAGPVVEVNAPAGGPAWFITDDALSRYVLADPRLVKDPDLAPAAWRGVVDGLDIPVPELRPFTLIAVDGEAHRRLHRIHAPAFNPRRLAERTDRIAAIAGRLLTELADASGRSGEPAELIGGFAYHFPLLVICELLGVPVTVPMAREAVSVLKALASAAQSGGGDGTDPAGGVPDTSALESLLLEAVHSARRNDTPTMTRVLYEHTQAEFGSVSDNQLVYMITGIIFAGHERTGSFLGFLLAEVLAGRLAADADEDAVSRFVEEAVRYHPPVPYTLWRFAATEVTIGGVRLPPGAPVLVDIEGTNTDGRHHDAPHAFHPDRPSWRRLTFGDGPHYCIGEQLAQLESRTMIGVLRSRFPEARLAVPYDELRWCRNGAQTARLTELPVWLR</sequence>
<dbReference type="EC" id="1.14.13.181" evidence="2"/>
<dbReference type="EMBL" id="AF403708">
    <property type="protein sequence ID" value="AAK95626.1"/>
    <property type="molecule type" value="Genomic_DNA"/>
</dbReference>
<dbReference type="SMR" id="Q93MI2"/>
<dbReference type="UniPathway" id="UPA00054"/>
<dbReference type="UniPathway" id="UPA01040"/>
<dbReference type="UniPathway" id="UPA01041"/>
<dbReference type="GO" id="GO:0005737">
    <property type="term" value="C:cytoplasm"/>
    <property type="evidence" value="ECO:0007669"/>
    <property type="project" value="UniProtKB-SubCell"/>
</dbReference>
<dbReference type="GO" id="GO:0020037">
    <property type="term" value="F:heme binding"/>
    <property type="evidence" value="ECO:0007669"/>
    <property type="project" value="InterPro"/>
</dbReference>
<dbReference type="GO" id="GO:0005506">
    <property type="term" value="F:iron ion binding"/>
    <property type="evidence" value="ECO:0007669"/>
    <property type="project" value="InterPro"/>
</dbReference>
<dbReference type="GO" id="GO:0016709">
    <property type="term" value="F:oxidoreductase activity, acting on paired donors, with incorporation or reduction of molecular oxygen, NAD(P)H as one donor, and incorporation of one atom of oxygen"/>
    <property type="evidence" value="ECO:0000314"/>
    <property type="project" value="UniProtKB"/>
</dbReference>
<dbReference type="GO" id="GO:1901771">
    <property type="term" value="P:daunorubicin biosynthetic process"/>
    <property type="evidence" value="ECO:0000314"/>
    <property type="project" value="UniProtKB"/>
</dbReference>
<dbReference type="GO" id="GO:0044598">
    <property type="term" value="P:doxorubicin metabolic process"/>
    <property type="evidence" value="ECO:0000314"/>
    <property type="project" value="UniProtKB"/>
</dbReference>
<dbReference type="Gene3D" id="1.10.630.10">
    <property type="entry name" value="Cytochrome P450"/>
    <property type="match status" value="1"/>
</dbReference>
<dbReference type="InterPro" id="IPR001128">
    <property type="entry name" value="Cyt_P450"/>
</dbReference>
<dbReference type="InterPro" id="IPR002397">
    <property type="entry name" value="Cyt_P450_B"/>
</dbReference>
<dbReference type="InterPro" id="IPR017972">
    <property type="entry name" value="Cyt_P450_CS"/>
</dbReference>
<dbReference type="InterPro" id="IPR036396">
    <property type="entry name" value="Cyt_P450_sf"/>
</dbReference>
<dbReference type="PANTHER" id="PTHR46696:SF1">
    <property type="entry name" value="CYTOCHROME P450 YJIB-RELATED"/>
    <property type="match status" value="1"/>
</dbReference>
<dbReference type="PANTHER" id="PTHR46696">
    <property type="entry name" value="P450, PUTATIVE (EUROFUNG)-RELATED"/>
    <property type="match status" value="1"/>
</dbReference>
<dbReference type="Pfam" id="PF00067">
    <property type="entry name" value="p450"/>
    <property type="match status" value="1"/>
</dbReference>
<dbReference type="PRINTS" id="PR00359">
    <property type="entry name" value="BP450"/>
</dbReference>
<dbReference type="PRINTS" id="PR00385">
    <property type="entry name" value="P450"/>
</dbReference>
<dbReference type="SUPFAM" id="SSF48264">
    <property type="entry name" value="Cytochrome P450"/>
    <property type="match status" value="1"/>
</dbReference>
<dbReference type="PROSITE" id="PS00086">
    <property type="entry name" value="CYTOCHROME_P450"/>
    <property type="match status" value="1"/>
</dbReference>
<accession>Q93MI2</accession>
<name>DOXA_STRC0</name>
<gene>
    <name type="primary">doxA</name>
</gene>
<comment type="function">
    <text evidence="2 3">Involved in the biosynthesis of the anthracyclines carminomycin, daunorubicin (daunomycin) and doxorubicin (adriamycin) which are aromatic polyketide antibiotics that exhibit high cytotoxicity and are widely applied in the chemotherapy of a variety of cancers. In vivo, DoxA catalyzes the C-13 hydroxylation of 13-deoxycarminomycin and 13-deoxydaunorubicin to yield 13-dihydrocarminomycin and 13-dihydrodaunorubicin, respectively, as well as the oxidation of these 13-dihydro-anthracyclines to their respective 13-keto forms, carminomycin and daunorubicin. In vivo, it also catalyzes the C-14 hydroxylation of daunorubicin to form doxorubicin. It can only use NADP. DoxA acts jointly with DnrV.</text>
</comment>
<comment type="catalytic activity">
    <reaction evidence="2">
        <text>13-deoxydaunorubicin + NADPH + O2 + H(+) = 13-dihydrodaunorubicin + NADP(+) + H2O</text>
        <dbReference type="Rhea" id="RHEA:37851"/>
        <dbReference type="ChEBI" id="CHEBI:15377"/>
        <dbReference type="ChEBI" id="CHEBI:15378"/>
        <dbReference type="ChEBI" id="CHEBI:15379"/>
        <dbReference type="ChEBI" id="CHEBI:57783"/>
        <dbReference type="ChEBI" id="CHEBI:58349"/>
        <dbReference type="ChEBI" id="CHEBI:75296"/>
        <dbReference type="ChEBI" id="CHEBI:75297"/>
        <dbReference type="EC" id="1.14.13.181"/>
    </reaction>
</comment>
<comment type="catalytic activity">
    <reaction evidence="2">
        <text>13-dihydrodaunorubicin + NADPH + O2 + H(+) = daunorubicin + NADP(+) + 2 H2O</text>
        <dbReference type="Rhea" id="RHEA:37847"/>
        <dbReference type="ChEBI" id="CHEBI:15377"/>
        <dbReference type="ChEBI" id="CHEBI:15378"/>
        <dbReference type="ChEBI" id="CHEBI:15379"/>
        <dbReference type="ChEBI" id="CHEBI:57783"/>
        <dbReference type="ChEBI" id="CHEBI:58349"/>
        <dbReference type="ChEBI" id="CHEBI:64677"/>
        <dbReference type="ChEBI" id="CHEBI:75296"/>
        <dbReference type="EC" id="1.14.13.181"/>
    </reaction>
</comment>
<comment type="catalytic activity">
    <reaction evidence="2">
        <text>13-deoxycarminomycin + NADPH + O2 + H(+) = 13-dihydrocarminomycin + NADP(+) + H2O</text>
        <dbReference type="Rhea" id="RHEA:56360"/>
        <dbReference type="ChEBI" id="CHEBI:15377"/>
        <dbReference type="ChEBI" id="CHEBI:15378"/>
        <dbReference type="ChEBI" id="CHEBI:15379"/>
        <dbReference type="ChEBI" id="CHEBI:57783"/>
        <dbReference type="ChEBI" id="CHEBI:58349"/>
        <dbReference type="ChEBI" id="CHEBI:140329"/>
        <dbReference type="ChEBI" id="CHEBI:140330"/>
    </reaction>
</comment>
<comment type="catalytic activity">
    <reaction evidence="2">
        <text>13-dihydrocarminomycin + NADPH + O2 + H(+) = carminomycin + NADP(+) + 2 H2O</text>
        <dbReference type="Rhea" id="RHEA:56364"/>
        <dbReference type="ChEBI" id="CHEBI:15377"/>
        <dbReference type="ChEBI" id="CHEBI:15378"/>
        <dbReference type="ChEBI" id="CHEBI:15379"/>
        <dbReference type="ChEBI" id="CHEBI:57783"/>
        <dbReference type="ChEBI" id="CHEBI:58349"/>
        <dbReference type="ChEBI" id="CHEBI:75730"/>
        <dbReference type="ChEBI" id="CHEBI:140330"/>
    </reaction>
</comment>
<comment type="catalytic activity">
    <reaction evidence="2">
        <text>daunorubicin + NADPH + O2 + H(+) = doxorubicin + NADP(+) + H2O</text>
        <dbReference type="Rhea" id="RHEA:15717"/>
        <dbReference type="ChEBI" id="CHEBI:15377"/>
        <dbReference type="ChEBI" id="CHEBI:15378"/>
        <dbReference type="ChEBI" id="CHEBI:15379"/>
        <dbReference type="ChEBI" id="CHEBI:57783"/>
        <dbReference type="ChEBI" id="CHEBI:58349"/>
        <dbReference type="ChEBI" id="CHEBI:64677"/>
        <dbReference type="ChEBI" id="CHEBI:64816"/>
        <dbReference type="EC" id="1.14.13.181"/>
    </reaction>
</comment>
<comment type="cofactor">
    <cofactor evidence="1">
        <name>heme</name>
        <dbReference type="ChEBI" id="CHEBI:30413"/>
    </cofactor>
</comment>
<comment type="pathway">
    <text>Antibiotic biosynthesis; daunorubicin biosynthesis.</text>
</comment>
<comment type="pathway">
    <text>Antibiotic biosynthesis; carminomycin biosynthesis.</text>
</comment>
<comment type="pathway">
    <text>Antibiotic biosynthesis; doxorubicin biosynthesis.</text>
</comment>
<comment type="subunit">
    <text evidence="1">Monomer.</text>
</comment>
<comment type="subcellular location">
    <subcellularLocation>
        <location evidence="1">Cytoplasm</location>
    </subcellularLocation>
</comment>
<comment type="miscellaneous">
    <text evidence="5">S.peucetius subsp. caesius ATCC 27952, a mutant strain derived from S.peucetius ATCC 29050, is the only organism reported to produce doxorubicin in vivo (PubMed:5365804).</text>
</comment>
<comment type="similarity">
    <text evidence="4">Belongs to the cytochrome P450 family.</text>
</comment>